<name>TPS3_PHYPO</name>
<proteinExistence type="evidence at transcript level"/>
<evidence type="ECO:0000250" key="1">
    <source>
        <dbReference type="UniProtKB" id="B5HDJ6"/>
    </source>
</evidence>
<evidence type="ECO:0000250" key="2">
    <source>
        <dbReference type="UniProtKB" id="Q9UR08"/>
    </source>
</evidence>
<evidence type="ECO:0000269" key="3">
    <source>
    </source>
</evidence>
<evidence type="ECO:0000303" key="4">
    <source>
    </source>
</evidence>
<evidence type="ECO:0000305" key="5"/>
<evidence type="ECO:0000305" key="6">
    <source>
    </source>
</evidence>
<comment type="function">
    <text evidence="3 6">Terpene synthase that may be involved in the production of volatile terpenoids (PubMed:31839833). Does not show detectable terpene products with either farnesyl diphosphate (FPP) or geranyl diphosphate (GPP) (PubMed:31839833). P.polycephalum has a unique biology and these volatile terpenoids could function in internal communication of P.polycephalum, to mark the territory that have been explored, or they may be involved in chemotaxis (Probable).</text>
</comment>
<comment type="cofactor">
    <cofactor evidence="2">
        <name>Mg(2+)</name>
        <dbReference type="ChEBI" id="CHEBI:18420"/>
    </cofactor>
</comment>
<comment type="domain">
    <text evidence="2">The 2 conserved active-site motifs D(D/E)XX(D/E) and NSE are required for coordinating the divalent metal ions that stabilize the PPi moiety of the substrate.</text>
</comment>
<comment type="domain">
    <text evidence="6">The C-terminal WxxxxxRY motif is frequently found in terpene synthases and is important to guide product formation.</text>
</comment>
<comment type="similarity">
    <text evidence="5">Belongs to the terpene synthase family.</text>
</comment>
<keyword id="KW-0456">Lyase</keyword>
<keyword id="KW-0460">Magnesium</keyword>
<keyword id="KW-0479">Metal-binding</keyword>
<gene>
    <name evidence="4" type="primary">TPS3</name>
</gene>
<accession>P9WEY5</accession>
<dbReference type="EC" id="4.2.3.-" evidence="6"/>
<dbReference type="EMBL" id="MN523654">
    <property type="protein sequence ID" value="QKE43663.1"/>
    <property type="molecule type" value="mRNA"/>
</dbReference>
<dbReference type="SMR" id="P9WEY5"/>
<dbReference type="GO" id="GO:0046872">
    <property type="term" value="F:metal ion binding"/>
    <property type="evidence" value="ECO:0007669"/>
    <property type="project" value="UniProtKB-KW"/>
</dbReference>
<dbReference type="GO" id="GO:0010333">
    <property type="term" value="F:terpene synthase activity"/>
    <property type="evidence" value="ECO:0007669"/>
    <property type="project" value="InterPro"/>
</dbReference>
<dbReference type="GO" id="GO:0046246">
    <property type="term" value="P:terpene biosynthetic process"/>
    <property type="evidence" value="ECO:0007669"/>
    <property type="project" value="UniProtKB-ARBA"/>
</dbReference>
<dbReference type="Gene3D" id="1.10.600.10">
    <property type="entry name" value="Farnesyl Diphosphate Synthase"/>
    <property type="match status" value="1"/>
</dbReference>
<dbReference type="InterPro" id="IPR008949">
    <property type="entry name" value="Isoprenoid_synthase_dom_sf"/>
</dbReference>
<dbReference type="InterPro" id="IPR034686">
    <property type="entry name" value="Terpene_cyclase-like_2"/>
</dbReference>
<dbReference type="PANTHER" id="PTHR35201:SF4">
    <property type="entry name" value="BETA-PINACENE SYNTHASE-RELATED"/>
    <property type="match status" value="1"/>
</dbReference>
<dbReference type="PANTHER" id="PTHR35201">
    <property type="entry name" value="TERPENE SYNTHASE"/>
    <property type="match status" value="1"/>
</dbReference>
<dbReference type="Pfam" id="PF19086">
    <property type="entry name" value="Terpene_syn_C_2"/>
    <property type="match status" value="1"/>
</dbReference>
<dbReference type="SUPFAM" id="SSF48576">
    <property type="entry name" value="Terpenoid synthases"/>
    <property type="match status" value="1"/>
</dbReference>
<reference key="1">
    <citation type="journal article" date="2019" name="Beilstein J. Org. Chem.">
        <title>Emission and biosynthesis of volatile terpenoids from the plasmodial slime mold Physarum polycephalum.</title>
        <authorList>
            <person name="Chen X."/>
            <person name="Koellner T.G."/>
            <person name="Xiong W."/>
            <person name="Wei G."/>
            <person name="Chen F."/>
        </authorList>
    </citation>
    <scope>NUCLEOTIDE SEQUENCE [MRNA]</scope>
    <scope>DOMAIN</scope>
    <scope>FUNCTION</scope>
</reference>
<organism>
    <name type="scientific">Physarum polycephalum</name>
    <name type="common">Slime mold</name>
    <dbReference type="NCBI Taxonomy" id="5791"/>
    <lineage>
        <taxon>Eukaryota</taxon>
        <taxon>Amoebozoa</taxon>
        <taxon>Evosea</taxon>
        <taxon>Eumycetozoa</taxon>
        <taxon>Myxogastria</taxon>
        <taxon>Myxogastromycetidae</taxon>
        <taxon>Physariida</taxon>
        <taxon>Physaraceae</taxon>
        <taxon>Physarum</taxon>
    </lineage>
</organism>
<sequence length="353" mass="40041">MEVLRQMLVHKANNSSMSTHKGLNRTEPVRMTYDHCELLGQLSTLNFSAASNTFSSGYNTTIKGSAPKTIQTVSSLFSKDITKAMSDIGNLVARMFPTASAERAAVILDITVFGFIADDLLEDAALSSDSEAFDKLHMLMLRLVRNDSFSEDEYPEYQNLIRFTRPIFTKFQALASRTLLNRFAYTYQEYLQGVQWEASLQPNQIPDFETCKNVKRHVGAWLCYFVLAEFAREIEVPITVRGNLEVQKFVTLACDIASYDNDTFLLKKEIRDGVVSNTIVITYLHGAKRLQDALDRILEMRKQTESEILAITSNLPHFGKDDKVAREYINALTCVIGGNFEWCSKTTRYQDPK</sequence>
<feature type="chain" id="PRO_0000452100" description="Terpene synthase 3">
    <location>
        <begin position="1"/>
        <end position="353"/>
    </location>
</feature>
<feature type="short sequence motif" description="D(D/E)XX(D/E) motif" evidence="6">
    <location>
        <begin position="118"/>
        <end position="122"/>
    </location>
</feature>
<feature type="short sequence motif" description="NSE motif" evidence="6">
    <location>
        <begin position="261"/>
        <end position="269"/>
    </location>
</feature>
<feature type="short sequence motif" description="WxxxxxRY motif" evidence="6">
    <location>
        <begin position="342"/>
        <end position="349"/>
    </location>
</feature>
<feature type="binding site" evidence="2">
    <location>
        <position position="118"/>
    </location>
    <ligand>
        <name>Mg(2+)</name>
        <dbReference type="ChEBI" id="CHEBI:18420"/>
        <label>1</label>
    </ligand>
</feature>
<feature type="binding site" evidence="2">
    <location>
        <position position="118"/>
    </location>
    <ligand>
        <name>Mg(2+)</name>
        <dbReference type="ChEBI" id="CHEBI:18420"/>
        <label>2</label>
    </ligand>
</feature>
<feature type="binding site" evidence="2">
    <location>
        <position position="261"/>
    </location>
    <ligand>
        <name>Mg(2+)</name>
        <dbReference type="ChEBI" id="CHEBI:18420"/>
        <label>3</label>
    </ligand>
</feature>
<feature type="binding site" evidence="2">
    <location>
        <position position="269"/>
    </location>
    <ligand>
        <name>Mg(2+)</name>
        <dbReference type="ChEBI" id="CHEBI:18420"/>
        <label>3</label>
    </ligand>
</feature>
<feature type="site" description="Plays a critical role in the stabilization of intermediate cation" evidence="1">
    <location>
        <position position="115"/>
    </location>
</feature>
<protein>
    <recommendedName>
        <fullName evidence="4">Terpene synthase 3</fullName>
        <shortName evidence="4">TPS3</shortName>
        <ecNumber evidence="6">4.2.3.-</ecNumber>
    </recommendedName>
    <alternativeName>
        <fullName evidence="5">Terpene cyclase TPS3</fullName>
    </alternativeName>
</protein>